<dbReference type="EMBL" id="Z50071">
    <property type="protein sequence ID" value="CAA90405.3"/>
    <property type="molecule type" value="Genomic_DNA"/>
</dbReference>
<dbReference type="EMBL" id="Z50071">
    <property type="protein sequence ID" value="CAH04718.2"/>
    <property type="molecule type" value="Genomic_DNA"/>
</dbReference>
<dbReference type="EMBL" id="Z50071">
    <property type="protein sequence ID" value="CAL64000.2"/>
    <property type="molecule type" value="Genomic_DNA"/>
</dbReference>
<dbReference type="PIR" id="T24660">
    <property type="entry name" value="T24660"/>
</dbReference>
<dbReference type="RefSeq" id="NP_001022323.2">
    <molecule id="Q22306-2"/>
    <property type="nucleotide sequence ID" value="NM_001027152.3"/>
</dbReference>
<dbReference type="RefSeq" id="NP_001022324.2">
    <molecule id="Q22306-1"/>
    <property type="nucleotide sequence ID" value="NM_001027153.4"/>
</dbReference>
<dbReference type="RefSeq" id="NP_001076633.1">
    <molecule id="Q22306-3"/>
    <property type="nucleotide sequence ID" value="NM_001083164.4"/>
</dbReference>
<dbReference type="SMR" id="Q22306"/>
<dbReference type="BioGRID" id="39743">
    <property type="interactions" value="11"/>
</dbReference>
<dbReference type="DIP" id="DIP-26139N"/>
<dbReference type="FunCoup" id="Q22306">
    <property type="interactions" value="754"/>
</dbReference>
<dbReference type="IntAct" id="Q22306">
    <property type="interactions" value="7"/>
</dbReference>
<dbReference type="PaxDb" id="6239-T07D4.2b"/>
<dbReference type="PeptideAtlas" id="Q22306"/>
<dbReference type="EnsemblMetazoa" id="T07D4.2a.1">
    <molecule id="Q22306-2"/>
    <property type="protein sequence ID" value="T07D4.2a.1"/>
    <property type="gene ID" value="WBGene00011579"/>
</dbReference>
<dbReference type="EnsemblMetazoa" id="T07D4.2b.1">
    <molecule id="Q22306-1"/>
    <property type="protein sequence ID" value="T07D4.2b.1"/>
    <property type="gene ID" value="WBGene00011579"/>
</dbReference>
<dbReference type="EnsemblMetazoa" id="T07D4.2c.1">
    <molecule id="Q22306-3"/>
    <property type="protein sequence ID" value="T07D4.2c.1"/>
    <property type="gene ID" value="WBGene00011579"/>
</dbReference>
<dbReference type="GeneID" id="174416"/>
<dbReference type="KEGG" id="cel:CELE_T07D4.2"/>
<dbReference type="UCSC" id="T07D4.2b">
    <molecule id="Q22306-1"/>
    <property type="organism name" value="c. elegans"/>
</dbReference>
<dbReference type="AGR" id="WB:WBGene00011579"/>
<dbReference type="CTD" id="174416"/>
<dbReference type="WormBase" id="T07D4.2a">
    <molecule id="Q22306-2"/>
    <property type="protein sequence ID" value="CE40620"/>
    <property type="gene ID" value="WBGene00011579"/>
</dbReference>
<dbReference type="WormBase" id="T07D4.2b">
    <molecule id="Q22306-1"/>
    <property type="protein sequence ID" value="CE40621"/>
    <property type="gene ID" value="WBGene00011579"/>
</dbReference>
<dbReference type="WormBase" id="T07D4.2c">
    <molecule id="Q22306-3"/>
    <property type="protein sequence ID" value="CE40622"/>
    <property type="gene ID" value="WBGene00011579"/>
</dbReference>
<dbReference type="eggNOG" id="KOG3947">
    <property type="taxonomic scope" value="Eukaryota"/>
</dbReference>
<dbReference type="GeneTree" id="ENSGT00390000007681"/>
<dbReference type="InParanoid" id="Q22306"/>
<dbReference type="OMA" id="IHPLTAD"/>
<dbReference type="OrthoDB" id="630188at2759"/>
<dbReference type="PhylomeDB" id="Q22306"/>
<dbReference type="PRO" id="PR:Q22306"/>
<dbReference type="Proteomes" id="UP000001940">
    <property type="component" value="Chromosome II"/>
</dbReference>
<dbReference type="Bgee" id="WBGene00011579">
    <property type="expression patterns" value="Expressed in larva and 2 other cell types or tissues"/>
</dbReference>
<dbReference type="GO" id="GO:0016787">
    <property type="term" value="F:hydrolase activity"/>
    <property type="evidence" value="ECO:0007669"/>
    <property type="project" value="InterPro"/>
</dbReference>
<dbReference type="CDD" id="cd07379">
    <property type="entry name" value="MPP_239FB"/>
    <property type="match status" value="1"/>
</dbReference>
<dbReference type="Gene3D" id="3.60.21.10">
    <property type="match status" value="1"/>
</dbReference>
<dbReference type="InterPro" id="IPR004843">
    <property type="entry name" value="Calcineurin-like_PHP_ApaH"/>
</dbReference>
<dbReference type="InterPro" id="IPR029052">
    <property type="entry name" value="Metallo-depent_PP-like"/>
</dbReference>
<dbReference type="InterPro" id="IPR051693">
    <property type="entry name" value="UPF0046_metallophosphoest"/>
</dbReference>
<dbReference type="PANTHER" id="PTHR12905:SF0">
    <property type="entry name" value="CALCINEURIN-LIKE PHOSPHOESTERASE DOMAIN-CONTAINING PROTEIN"/>
    <property type="match status" value="1"/>
</dbReference>
<dbReference type="PANTHER" id="PTHR12905">
    <property type="entry name" value="METALLOPHOSPHOESTERASE"/>
    <property type="match status" value="1"/>
</dbReference>
<dbReference type="Pfam" id="PF00149">
    <property type="entry name" value="Metallophos"/>
    <property type="match status" value="1"/>
</dbReference>
<dbReference type="SUPFAM" id="SSF56300">
    <property type="entry name" value="Metallo-dependent phosphatases"/>
    <property type="match status" value="1"/>
</dbReference>
<proteinExistence type="evidence at protein level"/>
<comment type="interaction">
    <interactant intactId="EBI-311847">
        <id>Q22306</id>
    </interactant>
    <interactant intactId="EBI-311852">
        <id>Q19980</id>
        <label>cat-4</label>
    </interactant>
    <organismsDiffer>false</organismsDiffer>
    <experiments>2</experiments>
</comment>
<comment type="alternative products">
    <event type="alternative splicing"/>
    <isoform>
        <id>Q22306-1</id>
        <name>b</name>
        <sequence type="displayed"/>
    </isoform>
    <isoform>
        <id>Q22306-2</id>
        <name>a</name>
        <sequence type="described" ref="VSP_026508"/>
    </isoform>
    <isoform>
        <id>Q22306-3</id>
        <name>c</name>
        <sequence type="described" ref="VSP_026509"/>
    </isoform>
</comment>
<comment type="similarity">
    <text evidence="2">Belongs to the UPF0046 family.</text>
</comment>
<protein>
    <recommendedName>
        <fullName>UPF0046 protein T07D4.2</fullName>
    </recommendedName>
</protein>
<accession>Q22306</accession>
<accession>A0FLR0</accession>
<accession>Q6BEU9</accession>
<reference key="1">
    <citation type="journal article" date="1998" name="Science">
        <title>Genome sequence of the nematode C. elegans: a platform for investigating biology.</title>
        <authorList>
            <consortium name="The C. elegans sequencing consortium"/>
        </authorList>
    </citation>
    <scope>NUCLEOTIDE SEQUENCE [LARGE SCALE GENOMIC DNA]</scope>
    <scope>ALTERNATIVE SPLICING</scope>
    <source>
        <strain>Bristol N2</strain>
    </source>
</reference>
<feature type="chain" id="PRO_0000053410" description="UPF0046 protein T07D4.2">
    <location>
        <begin position="1"/>
        <end position="396"/>
    </location>
</feature>
<feature type="region of interest" description="Disordered" evidence="1">
    <location>
        <begin position="73"/>
        <end position="94"/>
    </location>
</feature>
<feature type="splice variant" id="VSP_026508" description="In isoform a." evidence="2">
    <original>MLSPALLKVSLNRRSSAPVPQDEKMMFHSRNRAASYLQPMIEDQELIGFNRDRRRSSGSIIVDSFELGNASPSRRGSIASGIPMDKKTRRKLSNP</original>
    <variation>MFSKSSNRFGTTSIFGDQSIKDEYRNRQRRLSLIGGPISGTSPNRRESLVRELRT</variation>
    <location>
        <begin position="1"/>
        <end position="95"/>
    </location>
</feature>
<feature type="splice variant" id="VSP_026509" description="In isoform c." evidence="2">
    <location>
        <begin position="1"/>
        <end position="24"/>
    </location>
</feature>
<keyword id="KW-0025">Alternative splicing</keyword>
<keyword id="KW-1185">Reference proteome</keyword>
<organism>
    <name type="scientific">Caenorhabditis elegans</name>
    <dbReference type="NCBI Taxonomy" id="6239"/>
    <lineage>
        <taxon>Eukaryota</taxon>
        <taxon>Metazoa</taxon>
        <taxon>Ecdysozoa</taxon>
        <taxon>Nematoda</taxon>
        <taxon>Chromadorea</taxon>
        <taxon>Rhabditida</taxon>
        <taxon>Rhabditina</taxon>
        <taxon>Rhabditomorpha</taxon>
        <taxon>Rhabditoidea</taxon>
        <taxon>Rhabditidae</taxon>
        <taxon>Peloderinae</taxon>
        <taxon>Caenorhabditis</taxon>
    </lineage>
</organism>
<sequence length="396" mass="44869">MLSPALLKVSLNRRSSAPVPQDEKMMFHSRNRAASYLQPMIEDQELIGFNRDRRRSSGSIIVDSFELGNASPSRRGSIASGIPMDKKTRRKLSNPVSLHQYTEDPTLAWEMLKEKRPVKPVRQMRLDTPVKPDHVRFVCIGCTHGEQFDISKLPPGDVLLVAGDFTSCGLPNEVHNFNKLLGKLKYSYKVVIGGNHECTFDDTFLKLKQESEPKEMALKQALLSAIHSDSKGGISAKDLLSNAIYLEDNVIELFGITIYGTPWQPKVDNWAFNLSRGQQLLDKWNLIPAGVDVLLTHTPPLGHGDMMNNGQRMGCAELLNTVFKRVRPKYHVFGHIHEGYGCTTDGYTKFINCCMCNENLDLKNEPVIFDIPVHPHTKQFYIQNVKKIHKRFQKKK</sequence>
<gene>
    <name type="ORF">T07D4.2</name>
</gene>
<name>YW12_CAEEL</name>
<evidence type="ECO:0000256" key="1">
    <source>
        <dbReference type="SAM" id="MobiDB-lite"/>
    </source>
</evidence>
<evidence type="ECO:0000305" key="2"/>